<accession>P09043</accession>
<comment type="catalytic activity">
    <reaction>
        <text>D-glyceraldehyde 3-phosphate + phosphate + NADP(+) = (2R)-3-phospho-glyceroyl phosphate + NADPH + H(+)</text>
        <dbReference type="Rhea" id="RHEA:10296"/>
        <dbReference type="ChEBI" id="CHEBI:15378"/>
        <dbReference type="ChEBI" id="CHEBI:43474"/>
        <dbReference type="ChEBI" id="CHEBI:57604"/>
        <dbReference type="ChEBI" id="CHEBI:57783"/>
        <dbReference type="ChEBI" id="CHEBI:58349"/>
        <dbReference type="ChEBI" id="CHEBI:59776"/>
        <dbReference type="EC" id="1.2.1.13"/>
    </reaction>
</comment>
<comment type="pathway">
    <text>Carbohydrate biosynthesis; Calvin cycle.</text>
</comment>
<comment type="subunit">
    <text evidence="1">Tetramer of either four A chains (GAPDH 2) or two A and two B chains (GAPDH 1).</text>
</comment>
<comment type="subcellular location">
    <subcellularLocation>
        <location evidence="1">Plastid</location>
        <location evidence="1">Chloroplast</location>
    </subcellularLocation>
</comment>
<comment type="miscellaneous">
    <text>Plants contain two types of GAPDH: cytosolic forms which participate in glycolysis and chloroplast forms which participate in photosynthesis. All the forms are encoded by distinct genes.</text>
</comment>
<comment type="similarity">
    <text evidence="3">Belongs to the glyceraldehyde-3-phosphate dehydrogenase family.</text>
</comment>
<name>G3PA_TOBAC</name>
<keyword id="KW-0113">Calvin cycle</keyword>
<keyword id="KW-0150">Chloroplast</keyword>
<keyword id="KW-0521">NADP</keyword>
<keyword id="KW-0560">Oxidoreductase</keyword>
<keyword id="KW-0934">Plastid</keyword>
<keyword id="KW-1185">Reference proteome</keyword>
<keyword id="KW-0809">Transit peptide</keyword>
<dbReference type="EC" id="1.2.1.13"/>
<dbReference type="EMBL" id="M14417">
    <property type="protein sequence ID" value="AAA34075.1"/>
    <property type="molecule type" value="mRNA"/>
</dbReference>
<dbReference type="PIR" id="A24430">
    <property type="entry name" value="A24430"/>
</dbReference>
<dbReference type="SMR" id="P09043"/>
<dbReference type="STRING" id="4097.P09043"/>
<dbReference type="PaxDb" id="4097-P09043"/>
<dbReference type="ProMEX" id="P09043"/>
<dbReference type="UniPathway" id="UPA00116"/>
<dbReference type="Proteomes" id="UP000084051">
    <property type="component" value="Unplaced"/>
</dbReference>
<dbReference type="GO" id="GO:0009507">
    <property type="term" value="C:chloroplast"/>
    <property type="evidence" value="ECO:0007669"/>
    <property type="project" value="UniProtKB-SubCell"/>
</dbReference>
<dbReference type="GO" id="GO:0004365">
    <property type="term" value="F:glyceraldehyde-3-phosphate dehydrogenase (NAD+) (phosphorylating) activity"/>
    <property type="evidence" value="ECO:0000318"/>
    <property type="project" value="GO_Central"/>
</dbReference>
<dbReference type="GO" id="GO:0047100">
    <property type="term" value="F:glyceraldehyde-3-phosphate dehydrogenase (NADP+) (phosphorylating) activity"/>
    <property type="evidence" value="ECO:0007669"/>
    <property type="project" value="UniProtKB-EC"/>
</dbReference>
<dbReference type="GO" id="GO:0051287">
    <property type="term" value="F:NAD binding"/>
    <property type="evidence" value="ECO:0000318"/>
    <property type="project" value="GO_Central"/>
</dbReference>
<dbReference type="GO" id="GO:0050661">
    <property type="term" value="F:NADP binding"/>
    <property type="evidence" value="ECO:0007669"/>
    <property type="project" value="InterPro"/>
</dbReference>
<dbReference type="GO" id="GO:0006006">
    <property type="term" value="P:glucose metabolic process"/>
    <property type="evidence" value="ECO:0000318"/>
    <property type="project" value="GO_Central"/>
</dbReference>
<dbReference type="GO" id="GO:0019253">
    <property type="term" value="P:reductive pentose-phosphate cycle"/>
    <property type="evidence" value="ECO:0007669"/>
    <property type="project" value="UniProtKB-UniPathway"/>
</dbReference>
<dbReference type="CDD" id="cd18126">
    <property type="entry name" value="GAPDH_I_C"/>
    <property type="match status" value="1"/>
</dbReference>
<dbReference type="CDD" id="cd05214">
    <property type="entry name" value="GAPDH_I_N"/>
    <property type="match status" value="1"/>
</dbReference>
<dbReference type="FunFam" id="3.30.360.10:FF:000002">
    <property type="entry name" value="Glyceraldehyde-3-phosphate dehydrogenase"/>
    <property type="match status" value="1"/>
</dbReference>
<dbReference type="FunFam" id="3.40.50.720:FF:000001">
    <property type="entry name" value="Glyceraldehyde-3-phosphate dehydrogenase"/>
    <property type="match status" value="1"/>
</dbReference>
<dbReference type="Gene3D" id="3.30.360.10">
    <property type="entry name" value="Dihydrodipicolinate Reductase, domain 2"/>
    <property type="match status" value="1"/>
</dbReference>
<dbReference type="Gene3D" id="3.40.50.720">
    <property type="entry name" value="NAD(P)-binding Rossmann-like Domain"/>
    <property type="match status" value="1"/>
</dbReference>
<dbReference type="InterPro" id="IPR020831">
    <property type="entry name" value="GlycerAld/Erythrose_P_DH"/>
</dbReference>
<dbReference type="InterPro" id="IPR020830">
    <property type="entry name" value="GlycerAld_3-P_DH_AS"/>
</dbReference>
<dbReference type="InterPro" id="IPR020829">
    <property type="entry name" value="GlycerAld_3-P_DH_cat"/>
</dbReference>
<dbReference type="InterPro" id="IPR020828">
    <property type="entry name" value="GlycerAld_3-P_DH_NAD(P)-bd"/>
</dbReference>
<dbReference type="InterPro" id="IPR006424">
    <property type="entry name" value="Glyceraldehyde-3-P_DH_1"/>
</dbReference>
<dbReference type="InterPro" id="IPR036291">
    <property type="entry name" value="NAD(P)-bd_dom_sf"/>
</dbReference>
<dbReference type="NCBIfam" id="TIGR01534">
    <property type="entry name" value="GAPDH-I"/>
    <property type="match status" value="1"/>
</dbReference>
<dbReference type="PANTHER" id="PTHR43148">
    <property type="entry name" value="GLYCERALDEHYDE-3-PHOSPHATE DEHYDROGENASE 2"/>
    <property type="match status" value="1"/>
</dbReference>
<dbReference type="Pfam" id="PF02800">
    <property type="entry name" value="Gp_dh_C"/>
    <property type="match status" value="1"/>
</dbReference>
<dbReference type="Pfam" id="PF00044">
    <property type="entry name" value="Gp_dh_N"/>
    <property type="match status" value="1"/>
</dbReference>
<dbReference type="PIRSF" id="PIRSF000149">
    <property type="entry name" value="GAP_DH"/>
    <property type="match status" value="1"/>
</dbReference>
<dbReference type="PRINTS" id="PR00078">
    <property type="entry name" value="G3PDHDRGNASE"/>
</dbReference>
<dbReference type="SMART" id="SM00846">
    <property type="entry name" value="Gp_dh_N"/>
    <property type="match status" value="1"/>
</dbReference>
<dbReference type="SUPFAM" id="SSF55347">
    <property type="entry name" value="Glyceraldehyde-3-phosphate dehydrogenase-like, C-terminal domain"/>
    <property type="match status" value="1"/>
</dbReference>
<dbReference type="SUPFAM" id="SSF51735">
    <property type="entry name" value="NAD(P)-binding Rossmann-fold domains"/>
    <property type="match status" value="1"/>
</dbReference>
<dbReference type="PROSITE" id="PS00071">
    <property type="entry name" value="GAPDH"/>
    <property type="match status" value="1"/>
</dbReference>
<sequence length="392" mass="41863">NSSLQVSNKGFSEFSGLRTSSAIPFGRKTNDDLLSVVAFQTSVIGGGNSKRGVVEAKLKVAINGFGRIGRNFLRCWHGRKDSPLDVIAINDTGGVKQASHLLKYDSTLGIFDADVKPVGTDGISVDGKVIQVVSDRNPVNLPWGDLGIDLVIEGTGVFVDREGAGKHIQAGAKKVLITAPGKGDIPTYVVGVNADLYNPDEPIISNASCTTNCLAPFVKVLDQKFGIIKGTMTTTHSYTGDQRLLDASHRDLRRARAAALNIVPTSTGAAKAVALSSQALRGSSMALPLRVPTPNVSVVDLVVQVSKKTFAEEVNAAFREAADKELKGILDVCDEPLVSVDFRCSDVSSTVDASLTMVMGDDMVKVIAWYDNEWGYSQRVVDLADIVANQWK</sequence>
<organism>
    <name type="scientific">Nicotiana tabacum</name>
    <name type="common">Common tobacco</name>
    <dbReference type="NCBI Taxonomy" id="4097"/>
    <lineage>
        <taxon>Eukaryota</taxon>
        <taxon>Viridiplantae</taxon>
        <taxon>Streptophyta</taxon>
        <taxon>Embryophyta</taxon>
        <taxon>Tracheophyta</taxon>
        <taxon>Spermatophyta</taxon>
        <taxon>Magnoliopsida</taxon>
        <taxon>eudicotyledons</taxon>
        <taxon>Gunneridae</taxon>
        <taxon>Pentapetalae</taxon>
        <taxon>asterids</taxon>
        <taxon>lamiids</taxon>
        <taxon>Solanales</taxon>
        <taxon>Solanaceae</taxon>
        <taxon>Nicotianoideae</taxon>
        <taxon>Nicotianeae</taxon>
        <taxon>Nicotiana</taxon>
    </lineage>
</organism>
<proteinExistence type="evidence at transcript level"/>
<feature type="transit peptide" description="Chloroplast">
    <location>
        <begin position="1" status="less than"/>
        <end position="56"/>
    </location>
</feature>
<feature type="chain" id="PRO_0000010427" description="Glyceraldehyde-3-phosphate dehydrogenase A, chloroplastic">
    <location>
        <begin position="57"/>
        <end position="392"/>
    </location>
</feature>
<feature type="active site" description="Nucleophile" evidence="2">
    <location>
        <position position="209"/>
    </location>
</feature>
<feature type="binding site" evidence="1">
    <location>
        <begin position="67"/>
        <end position="68"/>
    </location>
    <ligand>
        <name>NADP(+)</name>
        <dbReference type="ChEBI" id="CHEBI:58349"/>
    </ligand>
</feature>
<feature type="binding site" evidence="1">
    <location>
        <position position="91"/>
    </location>
    <ligand>
        <name>NADP(+)</name>
        <dbReference type="ChEBI" id="CHEBI:58349"/>
    </ligand>
</feature>
<feature type="binding site" evidence="1">
    <location>
        <position position="136"/>
    </location>
    <ligand>
        <name>NADP(+)</name>
        <dbReference type="ChEBI" id="CHEBI:58349"/>
    </ligand>
</feature>
<feature type="binding site" evidence="1">
    <location>
        <begin position="208"/>
        <end position="210"/>
    </location>
    <ligand>
        <name>D-glyceraldehyde 3-phosphate</name>
        <dbReference type="ChEBI" id="CHEBI:59776"/>
    </ligand>
</feature>
<feature type="binding site" evidence="1">
    <location>
        <position position="239"/>
    </location>
    <ligand>
        <name>D-glyceraldehyde 3-phosphate</name>
        <dbReference type="ChEBI" id="CHEBI:59776"/>
    </ligand>
</feature>
<feature type="binding site" evidence="1">
    <location>
        <position position="254"/>
    </location>
    <ligand>
        <name>D-glyceraldehyde 3-phosphate</name>
        <dbReference type="ChEBI" id="CHEBI:59776"/>
    </ligand>
</feature>
<feature type="binding site" evidence="1">
    <location>
        <begin position="267"/>
        <end position="268"/>
    </location>
    <ligand>
        <name>D-glyceraldehyde 3-phosphate</name>
        <dbReference type="ChEBI" id="CHEBI:59776"/>
    </ligand>
</feature>
<feature type="binding site" evidence="1">
    <location>
        <position position="290"/>
    </location>
    <ligand>
        <name>D-glyceraldehyde 3-phosphate</name>
        <dbReference type="ChEBI" id="CHEBI:59776"/>
    </ligand>
</feature>
<feature type="binding site" evidence="1">
    <location>
        <position position="372"/>
    </location>
    <ligand>
        <name>NADP(+)</name>
        <dbReference type="ChEBI" id="CHEBI:58349"/>
    </ligand>
</feature>
<feature type="site" description="Activates thiol group during catalysis" evidence="1">
    <location>
        <position position="236"/>
    </location>
</feature>
<feature type="non-terminal residue">
    <location>
        <position position="1"/>
    </location>
</feature>
<gene>
    <name type="primary">GAPA</name>
</gene>
<protein>
    <recommendedName>
        <fullName>Glyceraldehyde-3-phosphate dehydrogenase A, chloroplastic</fullName>
        <ecNumber>1.2.1.13</ecNumber>
    </recommendedName>
    <alternativeName>
        <fullName>NADP-dependent glyceraldehydephosphate dehydrogenase subunit A</fullName>
    </alternativeName>
</protein>
<evidence type="ECO:0000250" key="1"/>
<evidence type="ECO:0000255" key="2">
    <source>
        <dbReference type="PROSITE-ProRule" id="PRU10009"/>
    </source>
</evidence>
<evidence type="ECO:0000305" key="3"/>
<reference key="1">
    <citation type="journal article" date="1986" name="Cell">
        <title>Evidence in favor of the symbiotic origin of chloroplasts: primary structure and evolution of tobacco glyceraldehyde-3-phosphate dehydrogenases.</title>
        <authorList>
            <person name="Shih M.-C."/>
            <person name="Lazar G."/>
            <person name="Goodman H.M."/>
        </authorList>
    </citation>
    <scope>NUCLEOTIDE SEQUENCE [MRNA]</scope>
</reference>